<gene>
    <name evidence="1" type="primary">tig</name>
    <name type="ordered locus">str0132</name>
</gene>
<reference key="1">
    <citation type="journal article" date="2004" name="Nat. Biotechnol.">
        <title>Complete sequence and comparative genome analysis of the dairy bacterium Streptococcus thermophilus.</title>
        <authorList>
            <person name="Bolotin A."/>
            <person name="Quinquis B."/>
            <person name="Renault P."/>
            <person name="Sorokin A."/>
            <person name="Ehrlich S.D."/>
            <person name="Kulakauskas S."/>
            <person name="Lapidus A."/>
            <person name="Goltsman E."/>
            <person name="Mazur M."/>
            <person name="Pusch G.D."/>
            <person name="Fonstein M."/>
            <person name="Overbeek R."/>
            <person name="Kyprides N."/>
            <person name="Purnelle B."/>
            <person name="Prozzi D."/>
            <person name="Ngui K."/>
            <person name="Masuy D."/>
            <person name="Hancy F."/>
            <person name="Burteau S."/>
            <person name="Boutry M."/>
            <person name="Delcour J."/>
            <person name="Goffeau A."/>
            <person name="Hols P."/>
        </authorList>
    </citation>
    <scope>NUCLEOTIDE SEQUENCE [LARGE SCALE GENOMIC DNA]</scope>
    <source>
        <strain>CNRZ 1066</strain>
    </source>
</reference>
<name>TIG_STRT1</name>
<dbReference type="EC" id="5.2.1.8" evidence="1"/>
<dbReference type="EMBL" id="CP000024">
    <property type="protein sequence ID" value="AAV61747.1"/>
    <property type="molecule type" value="Genomic_DNA"/>
</dbReference>
<dbReference type="RefSeq" id="WP_011225339.1">
    <property type="nucleotide sequence ID" value="NC_006449.1"/>
</dbReference>
<dbReference type="SMR" id="Q5M1S9"/>
<dbReference type="GeneID" id="66898078"/>
<dbReference type="KEGG" id="stc:str0132"/>
<dbReference type="HOGENOM" id="CLU_033058_3_2_9"/>
<dbReference type="GO" id="GO:0005737">
    <property type="term" value="C:cytoplasm"/>
    <property type="evidence" value="ECO:0007669"/>
    <property type="project" value="UniProtKB-SubCell"/>
</dbReference>
<dbReference type="GO" id="GO:0003755">
    <property type="term" value="F:peptidyl-prolyl cis-trans isomerase activity"/>
    <property type="evidence" value="ECO:0007669"/>
    <property type="project" value="UniProtKB-UniRule"/>
</dbReference>
<dbReference type="GO" id="GO:0044183">
    <property type="term" value="F:protein folding chaperone"/>
    <property type="evidence" value="ECO:0007669"/>
    <property type="project" value="TreeGrafter"/>
</dbReference>
<dbReference type="GO" id="GO:0043022">
    <property type="term" value="F:ribosome binding"/>
    <property type="evidence" value="ECO:0007669"/>
    <property type="project" value="TreeGrafter"/>
</dbReference>
<dbReference type="GO" id="GO:0051083">
    <property type="term" value="P:'de novo' cotranslational protein folding"/>
    <property type="evidence" value="ECO:0007669"/>
    <property type="project" value="TreeGrafter"/>
</dbReference>
<dbReference type="GO" id="GO:0051301">
    <property type="term" value="P:cell division"/>
    <property type="evidence" value="ECO:0007669"/>
    <property type="project" value="UniProtKB-KW"/>
</dbReference>
<dbReference type="GO" id="GO:0061077">
    <property type="term" value="P:chaperone-mediated protein folding"/>
    <property type="evidence" value="ECO:0007669"/>
    <property type="project" value="TreeGrafter"/>
</dbReference>
<dbReference type="GO" id="GO:0015031">
    <property type="term" value="P:protein transport"/>
    <property type="evidence" value="ECO:0007669"/>
    <property type="project" value="UniProtKB-UniRule"/>
</dbReference>
<dbReference type="GO" id="GO:0043335">
    <property type="term" value="P:protein unfolding"/>
    <property type="evidence" value="ECO:0007669"/>
    <property type="project" value="TreeGrafter"/>
</dbReference>
<dbReference type="FunFam" id="3.10.50.40:FF:000001">
    <property type="entry name" value="Trigger factor"/>
    <property type="match status" value="1"/>
</dbReference>
<dbReference type="Gene3D" id="3.10.50.40">
    <property type="match status" value="1"/>
</dbReference>
<dbReference type="Gene3D" id="3.30.70.1050">
    <property type="entry name" value="Trigger factor ribosome-binding domain"/>
    <property type="match status" value="1"/>
</dbReference>
<dbReference type="Gene3D" id="1.10.3120.10">
    <property type="entry name" value="Trigger factor, C-terminal domain"/>
    <property type="match status" value="1"/>
</dbReference>
<dbReference type="HAMAP" id="MF_00303">
    <property type="entry name" value="Trigger_factor_Tig"/>
    <property type="match status" value="1"/>
</dbReference>
<dbReference type="InterPro" id="IPR046357">
    <property type="entry name" value="PPIase_dom_sf"/>
</dbReference>
<dbReference type="InterPro" id="IPR001179">
    <property type="entry name" value="PPIase_FKBP_dom"/>
</dbReference>
<dbReference type="InterPro" id="IPR005215">
    <property type="entry name" value="Trig_fac"/>
</dbReference>
<dbReference type="InterPro" id="IPR008880">
    <property type="entry name" value="Trigger_fac_C"/>
</dbReference>
<dbReference type="InterPro" id="IPR037041">
    <property type="entry name" value="Trigger_fac_C_sf"/>
</dbReference>
<dbReference type="InterPro" id="IPR008881">
    <property type="entry name" value="Trigger_fac_ribosome-bd_bac"/>
</dbReference>
<dbReference type="InterPro" id="IPR036611">
    <property type="entry name" value="Trigger_fac_ribosome-bd_sf"/>
</dbReference>
<dbReference type="InterPro" id="IPR027304">
    <property type="entry name" value="Trigger_fact/SurA_dom_sf"/>
</dbReference>
<dbReference type="NCBIfam" id="TIGR00115">
    <property type="entry name" value="tig"/>
    <property type="match status" value="1"/>
</dbReference>
<dbReference type="PANTHER" id="PTHR30560">
    <property type="entry name" value="TRIGGER FACTOR CHAPERONE AND PEPTIDYL-PROLYL CIS/TRANS ISOMERASE"/>
    <property type="match status" value="1"/>
</dbReference>
<dbReference type="PANTHER" id="PTHR30560:SF3">
    <property type="entry name" value="TRIGGER FACTOR-LIKE PROTEIN TIG, CHLOROPLASTIC"/>
    <property type="match status" value="1"/>
</dbReference>
<dbReference type="Pfam" id="PF00254">
    <property type="entry name" value="FKBP_C"/>
    <property type="match status" value="1"/>
</dbReference>
<dbReference type="Pfam" id="PF05698">
    <property type="entry name" value="Trigger_C"/>
    <property type="match status" value="1"/>
</dbReference>
<dbReference type="Pfam" id="PF05697">
    <property type="entry name" value="Trigger_N"/>
    <property type="match status" value="1"/>
</dbReference>
<dbReference type="PIRSF" id="PIRSF003095">
    <property type="entry name" value="Trigger_factor"/>
    <property type="match status" value="1"/>
</dbReference>
<dbReference type="SUPFAM" id="SSF54534">
    <property type="entry name" value="FKBP-like"/>
    <property type="match status" value="1"/>
</dbReference>
<dbReference type="SUPFAM" id="SSF109998">
    <property type="entry name" value="Triger factor/SurA peptide-binding domain-like"/>
    <property type="match status" value="1"/>
</dbReference>
<dbReference type="SUPFAM" id="SSF102735">
    <property type="entry name" value="Trigger factor ribosome-binding domain"/>
    <property type="match status" value="1"/>
</dbReference>
<dbReference type="PROSITE" id="PS50059">
    <property type="entry name" value="FKBP_PPIASE"/>
    <property type="match status" value="1"/>
</dbReference>
<organism>
    <name type="scientific">Streptococcus thermophilus (strain CNRZ 1066)</name>
    <dbReference type="NCBI Taxonomy" id="299768"/>
    <lineage>
        <taxon>Bacteria</taxon>
        <taxon>Bacillati</taxon>
        <taxon>Bacillota</taxon>
        <taxon>Bacilli</taxon>
        <taxon>Lactobacillales</taxon>
        <taxon>Streptococcaceae</taxon>
        <taxon>Streptococcus</taxon>
    </lineage>
</organism>
<proteinExistence type="inferred from homology"/>
<sequence length="427" mass="46696">MSVSFENTATNRGVVTFTIGQDKIQPALDQAFNKIKKNLNVPGFRKGHIPRAVFNQKFGEEALYDDALNAILPAAYEAAIAELGLDVVAQPKIDVKSIGKGQDWTLTAEVVTKPEVKLGAYKDLEVSVEVSKEVTDEEVDAKLENERKNLAELIVKDGAAEYGDTVVIDFVGSVDGVEFDGGKGENHSLELGSGQFIPGFEDQLVGAKSGDEVEVKVTFPEDYQATDLAGKAAVFVTKVNEVKAKEVPALDDELAKDLDDEVDTLDELKAKYRKELEAAKEIAFDDAVEGAALDLAVENAEIVELPAEMVENEVHRAMNEFMGNLQRQGISPEMYFQITGTTQEDLRKQYEADSDKRVKTNLVIEAVAAAEGFDATDEEIQKEINDLAAEYNMEVSQVSELLSPEMLKHDIAMKKAVEVITSSAKVK</sequence>
<protein>
    <recommendedName>
        <fullName evidence="1">Trigger factor</fullName>
        <shortName evidence="1">TF</shortName>
        <ecNumber evidence="1">5.2.1.8</ecNumber>
    </recommendedName>
    <alternativeName>
        <fullName evidence="1">PPIase</fullName>
    </alternativeName>
</protein>
<evidence type="ECO:0000255" key="1">
    <source>
        <dbReference type="HAMAP-Rule" id="MF_00303"/>
    </source>
</evidence>
<keyword id="KW-0131">Cell cycle</keyword>
<keyword id="KW-0132">Cell division</keyword>
<keyword id="KW-0143">Chaperone</keyword>
<keyword id="KW-0963">Cytoplasm</keyword>
<keyword id="KW-0413">Isomerase</keyword>
<keyword id="KW-0697">Rotamase</keyword>
<feature type="chain" id="PRO_0000179444" description="Trigger factor">
    <location>
        <begin position="1"/>
        <end position="427"/>
    </location>
</feature>
<feature type="domain" description="PPIase FKBP-type" evidence="1">
    <location>
        <begin position="163"/>
        <end position="248"/>
    </location>
</feature>
<comment type="function">
    <text evidence="1">Involved in protein export. Acts as a chaperone by maintaining the newly synthesized protein in an open conformation. Functions as a peptidyl-prolyl cis-trans isomerase.</text>
</comment>
<comment type="catalytic activity">
    <reaction evidence="1">
        <text>[protein]-peptidylproline (omega=180) = [protein]-peptidylproline (omega=0)</text>
        <dbReference type="Rhea" id="RHEA:16237"/>
        <dbReference type="Rhea" id="RHEA-COMP:10747"/>
        <dbReference type="Rhea" id="RHEA-COMP:10748"/>
        <dbReference type="ChEBI" id="CHEBI:83833"/>
        <dbReference type="ChEBI" id="CHEBI:83834"/>
        <dbReference type="EC" id="5.2.1.8"/>
    </reaction>
</comment>
<comment type="subcellular location">
    <subcellularLocation>
        <location>Cytoplasm</location>
    </subcellularLocation>
    <text evidence="1">About half TF is bound to the ribosome near the polypeptide exit tunnel while the other half is free in the cytoplasm.</text>
</comment>
<comment type="domain">
    <text evidence="1">Consists of 3 domains; the N-terminus binds the ribosome, the middle domain has PPIase activity, while the C-terminus has intrinsic chaperone activity on its own.</text>
</comment>
<comment type="similarity">
    <text evidence="1">Belongs to the FKBP-type PPIase family. Tig subfamily.</text>
</comment>
<accession>Q5M1S9</accession>